<protein>
    <recommendedName>
        <fullName evidence="1">ATP synthase F(0) complex subunit a</fullName>
    </recommendedName>
    <alternativeName>
        <fullName>F-ATPase protein 6</fullName>
    </alternativeName>
    <alternativeName>
        <fullName evidence="1">Proton-conducting channel, ATP synthase F(0) complex subunit a</fullName>
    </alternativeName>
</protein>
<organism>
    <name type="scientific">Carassius auratus</name>
    <name type="common">Goldfish</name>
    <dbReference type="NCBI Taxonomy" id="7957"/>
    <lineage>
        <taxon>Eukaryota</taxon>
        <taxon>Metazoa</taxon>
        <taxon>Chordata</taxon>
        <taxon>Craniata</taxon>
        <taxon>Vertebrata</taxon>
        <taxon>Euteleostomi</taxon>
        <taxon>Actinopterygii</taxon>
        <taxon>Neopterygii</taxon>
        <taxon>Teleostei</taxon>
        <taxon>Ostariophysi</taxon>
        <taxon>Cypriniformes</taxon>
        <taxon>Cyprinidae</taxon>
        <taxon>Cyprininae</taxon>
        <taxon>Carassius</taxon>
    </lineage>
</organism>
<gene>
    <name evidence="1" type="primary">mt-atp6</name>
    <name type="synonym">atp6</name>
    <name type="synonym">atpase6</name>
    <name type="synonym">mtatp6</name>
</gene>
<keyword id="KW-0066">ATP synthesis</keyword>
<keyword id="KW-0138">CF(0)</keyword>
<keyword id="KW-0375">Hydrogen ion transport</keyword>
<keyword id="KW-0406">Ion transport</keyword>
<keyword id="KW-0472">Membrane</keyword>
<keyword id="KW-0496">Mitochondrion</keyword>
<keyword id="KW-0999">Mitochondrion inner membrane</keyword>
<keyword id="KW-1185">Reference proteome</keyword>
<keyword id="KW-0812">Transmembrane</keyword>
<keyword id="KW-1133">Transmembrane helix</keyword>
<keyword id="KW-0813">Transport</keyword>
<comment type="function">
    <text evidence="1">Subunit a, of the mitochondrial membrane ATP synthase complex (F(1)F(0) ATP synthase or Complex V) that produces ATP from ADP in the presence of a proton gradient across the membrane which is generated by electron transport complexes of the respiratory chain. ATP synthase complex consist of a soluble F(1) head domain - the catalytic core - and a membrane F(1) domain - the membrane proton channel. These two domains are linked by a central stalk rotating inside the F(1) region and a stationary peripheral stalk. During catalysis, ATP synthesis in the catalytic domain of F(1) is coupled via a rotary mechanism of the central stalk subunits to proton translocation. With the subunit c (ATP5MC1), forms the proton-conducting channel in the F(0) domain, that contains two crucial half-channels (inlet and outlet) that facilitate proton movement from the mitochondrial intermembrane space (IMS) into the matrix. Protons are taken up via the inlet half-channel and released through the outlet half-channel, following a Grotthuss mechanism.</text>
</comment>
<comment type="catalytic activity">
    <reaction evidence="1">
        <text>H(+)(in) = H(+)(out)</text>
        <dbReference type="Rhea" id="RHEA:34979"/>
        <dbReference type="ChEBI" id="CHEBI:15378"/>
    </reaction>
</comment>
<comment type="subunit">
    <text evidence="1">Component of the ATP synthase complex composed at least of ATP5F1A/subunit alpha, ATP5F1B/subunit beta, ATP5MC1/subunit c (homooctomer), MT-ATP6/subunit a, MT-ATP8/subunit 8, ATP5ME/subunit e, ATP5MF/subunit f, ATP5MG/subunit g, ATP5MK/subunit k, ATP5MJ/subunit j, ATP5F1C/subunit gamma, ATP5F1D/subunit delta, ATP5F1E/subunit epsilon, ATP5PF/subunit F6, ATP5PB/subunit b, ATP5PD/subunit d, ATP5PO/subunit OSCP. ATP synthase complex consists of a soluble F(1) head domain (subunits alpha(3) and beta(3)) - the catalytic core - and a membrane F(0) domain - the membrane proton channel (subunits c, a, 8, e, f, g, k and j). These two domains are linked by a central stalk (subunits gamma, delta, and epsilon) rotating inside the F1 region and a stationary peripheral stalk (subunits F6, b, d, and OSCP). Interacts with DNAJC30; interaction is direct.</text>
</comment>
<comment type="subcellular location">
    <subcellularLocation>
        <location>Mitochondrion inner membrane</location>
        <topology>Multi-pass membrane protein</topology>
    </subcellularLocation>
</comment>
<comment type="similarity">
    <text evidence="3">Belongs to the ATPase A chain family.</text>
</comment>
<accession>O78684</accession>
<proteinExistence type="inferred from homology"/>
<sequence length="227" mass="25066">MMVSFFDQFASPSYLGIPLIAIAIALPWVLYPTSSSRWINNRLITIQGWFINRFTNQLMLPLNVGGHKWALLLASLMIFLITINMLGLLPYTFTPTTQLSLNMGFAVPLWLATVIIGMRNQPTVALGHLLPEGTPIPLIPVLIIIETISLFIRPLALGVRLTANLTAGHLLIQLIATAVFVLMPMMPTVAILTATVLFLLTLLEVAVAMIQAYVFVLLLSLYLQENV</sequence>
<dbReference type="EMBL" id="AB006953">
    <property type="protein sequence ID" value="BAA31243.1"/>
    <property type="molecule type" value="Genomic_DNA"/>
</dbReference>
<dbReference type="RefSeq" id="NP_008593.1">
    <property type="nucleotide sequence ID" value="NC_002079.1"/>
</dbReference>
<dbReference type="SMR" id="O78684"/>
<dbReference type="GeneID" id="808428"/>
<dbReference type="CTD" id="4508"/>
<dbReference type="OrthoDB" id="5976622at2759"/>
<dbReference type="Proteomes" id="UP000515129">
    <property type="component" value="Mitochondrion MT"/>
</dbReference>
<dbReference type="GO" id="GO:0005743">
    <property type="term" value="C:mitochondrial inner membrane"/>
    <property type="evidence" value="ECO:0007669"/>
    <property type="project" value="UniProtKB-SubCell"/>
</dbReference>
<dbReference type="GO" id="GO:0045259">
    <property type="term" value="C:proton-transporting ATP synthase complex"/>
    <property type="evidence" value="ECO:0000250"/>
    <property type="project" value="UniProtKB"/>
</dbReference>
<dbReference type="GO" id="GO:0015252">
    <property type="term" value="F:proton channel activity"/>
    <property type="evidence" value="ECO:0000250"/>
    <property type="project" value="UniProtKB"/>
</dbReference>
<dbReference type="GO" id="GO:0046933">
    <property type="term" value="F:proton-transporting ATP synthase activity, rotational mechanism"/>
    <property type="evidence" value="ECO:0007669"/>
    <property type="project" value="TreeGrafter"/>
</dbReference>
<dbReference type="GO" id="GO:0015986">
    <property type="term" value="P:proton motive force-driven ATP synthesis"/>
    <property type="evidence" value="ECO:0000250"/>
    <property type="project" value="UniProtKB"/>
</dbReference>
<dbReference type="GO" id="GO:1902600">
    <property type="term" value="P:proton transmembrane transport"/>
    <property type="evidence" value="ECO:0000250"/>
    <property type="project" value="UniProtKB"/>
</dbReference>
<dbReference type="CDD" id="cd00310">
    <property type="entry name" value="ATP-synt_Fo_a_6"/>
    <property type="match status" value="1"/>
</dbReference>
<dbReference type="FunFam" id="1.20.120.220:FF:000004">
    <property type="entry name" value="ATP synthase subunit a"/>
    <property type="match status" value="1"/>
</dbReference>
<dbReference type="Gene3D" id="1.20.120.220">
    <property type="entry name" value="ATP synthase, F0 complex, subunit A"/>
    <property type="match status" value="1"/>
</dbReference>
<dbReference type="InterPro" id="IPR000568">
    <property type="entry name" value="ATP_synth_F0_asu"/>
</dbReference>
<dbReference type="InterPro" id="IPR023011">
    <property type="entry name" value="ATP_synth_F0_asu_AS"/>
</dbReference>
<dbReference type="InterPro" id="IPR045083">
    <property type="entry name" value="ATP_synth_F0_asu_bact/mt"/>
</dbReference>
<dbReference type="InterPro" id="IPR035908">
    <property type="entry name" value="F0_ATP_A_sf"/>
</dbReference>
<dbReference type="NCBIfam" id="TIGR01131">
    <property type="entry name" value="ATP_synt_6_or_A"/>
    <property type="match status" value="1"/>
</dbReference>
<dbReference type="PANTHER" id="PTHR11410">
    <property type="entry name" value="ATP SYNTHASE SUBUNIT A"/>
    <property type="match status" value="1"/>
</dbReference>
<dbReference type="PANTHER" id="PTHR11410:SF0">
    <property type="entry name" value="ATP SYNTHASE SUBUNIT A"/>
    <property type="match status" value="1"/>
</dbReference>
<dbReference type="Pfam" id="PF00119">
    <property type="entry name" value="ATP-synt_A"/>
    <property type="match status" value="1"/>
</dbReference>
<dbReference type="PRINTS" id="PR00123">
    <property type="entry name" value="ATPASEA"/>
</dbReference>
<dbReference type="SUPFAM" id="SSF81336">
    <property type="entry name" value="F1F0 ATP synthase subunit A"/>
    <property type="match status" value="1"/>
</dbReference>
<dbReference type="PROSITE" id="PS00449">
    <property type="entry name" value="ATPASE_A"/>
    <property type="match status" value="1"/>
</dbReference>
<evidence type="ECO:0000250" key="1">
    <source>
        <dbReference type="UniProtKB" id="P00846"/>
    </source>
</evidence>
<evidence type="ECO:0000255" key="2"/>
<evidence type="ECO:0000305" key="3"/>
<feature type="chain" id="PRO_0000082104" description="ATP synthase F(0) complex subunit a">
    <location>
        <begin position="1"/>
        <end position="227"/>
    </location>
</feature>
<feature type="transmembrane region" description="Helical" evidence="2">
    <location>
        <begin position="9"/>
        <end position="29"/>
    </location>
</feature>
<feature type="transmembrane region" description="Helical" evidence="2">
    <location>
        <begin position="69"/>
        <end position="89"/>
    </location>
</feature>
<feature type="transmembrane region" description="Helical" evidence="2">
    <location>
        <begin position="98"/>
        <end position="118"/>
    </location>
</feature>
<feature type="transmembrane region" description="Helical" evidence="2">
    <location>
        <begin position="132"/>
        <end position="152"/>
    </location>
</feature>
<feature type="transmembrane region" description="Helical" evidence="2">
    <location>
        <begin position="165"/>
        <end position="185"/>
    </location>
</feature>
<feature type="transmembrane region" description="Helical" evidence="2">
    <location>
        <begin position="190"/>
        <end position="210"/>
    </location>
</feature>
<geneLocation type="mitochondrion"/>
<reference key="1">
    <citation type="journal article" date="1998" name="Zool. Sci.">
        <title>The complete sequence of mitochondrial genome from a gynogenetic triploid 'ginbuna' (Carassius auratus langsdorfi).</title>
        <authorList>
            <person name="Murakami M."/>
            <person name="Yamashita Y."/>
            <person name="Fujitani H."/>
        </authorList>
    </citation>
    <scope>NUCLEOTIDE SEQUENCE [GENOMIC DNA]</scope>
    <source>
        <strain>AZ3 / Langsdorfi</strain>
        <tissue>Oocyte</tissue>
    </source>
</reference>
<name>ATP6_CARAU</name>